<evidence type="ECO:0000269" key="1">
    <source>
    </source>
</evidence>
<evidence type="ECO:0000303" key="2">
    <source>
    </source>
</evidence>
<evidence type="ECO:0000305" key="3"/>
<evidence type="ECO:0000305" key="4">
    <source>
    </source>
</evidence>
<evidence type="ECO:0007744" key="5">
    <source>
        <dbReference type="PDB" id="6YW5"/>
    </source>
</evidence>
<evidence type="ECO:0007744" key="6">
    <source>
        <dbReference type="PDB" id="6YWX"/>
    </source>
</evidence>
<organism>
    <name type="scientific">Neurospora crassa (strain ATCC 24698 / 74-OR23-1A / CBS 708.71 / DSM 1257 / FGSC 987)</name>
    <dbReference type="NCBI Taxonomy" id="367110"/>
    <lineage>
        <taxon>Eukaryota</taxon>
        <taxon>Fungi</taxon>
        <taxon>Dikarya</taxon>
        <taxon>Ascomycota</taxon>
        <taxon>Pezizomycotina</taxon>
        <taxon>Sordariomycetes</taxon>
        <taxon>Sordariomycetidae</taxon>
        <taxon>Sordariales</taxon>
        <taxon>Sordariaceae</taxon>
        <taxon>Neurospora</taxon>
    </lineage>
</organism>
<reference key="1">
    <citation type="journal article" date="2003" name="Nature">
        <title>The genome sequence of the filamentous fungus Neurospora crassa.</title>
        <authorList>
            <person name="Galagan J.E."/>
            <person name="Calvo S.E."/>
            <person name="Borkovich K.A."/>
            <person name="Selker E.U."/>
            <person name="Read N.D."/>
            <person name="Jaffe D.B."/>
            <person name="FitzHugh W."/>
            <person name="Ma L.-J."/>
            <person name="Smirnov S."/>
            <person name="Purcell S."/>
            <person name="Rehman B."/>
            <person name="Elkins T."/>
            <person name="Engels R."/>
            <person name="Wang S."/>
            <person name="Nielsen C.B."/>
            <person name="Butler J."/>
            <person name="Endrizzi M."/>
            <person name="Qui D."/>
            <person name="Ianakiev P."/>
            <person name="Bell-Pedersen D."/>
            <person name="Nelson M.A."/>
            <person name="Werner-Washburne M."/>
            <person name="Selitrennikoff C.P."/>
            <person name="Kinsey J.A."/>
            <person name="Braun E.L."/>
            <person name="Zelter A."/>
            <person name="Schulte U."/>
            <person name="Kothe G.O."/>
            <person name="Jedd G."/>
            <person name="Mewes H.-W."/>
            <person name="Staben C."/>
            <person name="Marcotte E."/>
            <person name="Greenberg D."/>
            <person name="Roy A."/>
            <person name="Foley K."/>
            <person name="Naylor J."/>
            <person name="Stange-Thomann N."/>
            <person name="Barrett R."/>
            <person name="Gnerre S."/>
            <person name="Kamal M."/>
            <person name="Kamvysselis M."/>
            <person name="Mauceli E.W."/>
            <person name="Bielke C."/>
            <person name="Rudd S."/>
            <person name="Frishman D."/>
            <person name="Krystofova S."/>
            <person name="Rasmussen C."/>
            <person name="Metzenberg R.L."/>
            <person name="Perkins D.D."/>
            <person name="Kroken S."/>
            <person name="Cogoni C."/>
            <person name="Macino G."/>
            <person name="Catcheside D.E.A."/>
            <person name="Li W."/>
            <person name="Pratt R.J."/>
            <person name="Osmani S.A."/>
            <person name="DeSouza C.P.C."/>
            <person name="Glass N.L."/>
            <person name="Orbach M.J."/>
            <person name="Berglund J.A."/>
            <person name="Voelker R."/>
            <person name="Yarden O."/>
            <person name="Plamann M."/>
            <person name="Seiler S."/>
            <person name="Dunlap J.C."/>
            <person name="Radford A."/>
            <person name="Aramayo R."/>
            <person name="Natvig D.O."/>
            <person name="Alex L.A."/>
            <person name="Mannhaupt G."/>
            <person name="Ebbole D.J."/>
            <person name="Freitag M."/>
            <person name="Paulsen I."/>
            <person name="Sachs M.S."/>
            <person name="Lander E.S."/>
            <person name="Nusbaum C."/>
            <person name="Birren B.W."/>
        </authorList>
    </citation>
    <scope>NUCLEOTIDE SEQUENCE [LARGE SCALE GENOMIC DNA]</scope>
    <source>
        <strain>ATCC 24698 / 74-OR23-1A / CBS 708.71 / DSM 1257 / FGSC 987</strain>
    </source>
</reference>
<reference evidence="5 6" key="2">
    <citation type="journal article" date="2020" name="Nat. Commun.">
        <title>Analysis of translating mitoribosome reveals functional characteristics of translation in mitochondria of fungi.</title>
        <authorList>
            <person name="Itoh Y."/>
            <person name="Naschberger A."/>
            <person name="Mortezaei N."/>
            <person name="Herrmann J.M."/>
            <person name="Amunts A."/>
        </authorList>
    </citation>
    <scope>STRUCTURE BY ELECTRON MICROSCOPY (2.85 ANGSTROMS)</scope>
</reference>
<gene>
    <name type="primary">mrp17</name>
    <name type="ORF">NCU05717</name>
</gene>
<sequence>MLYETIGIVRPGNIAEVKELVLTAGKLILNQGGVIRDIKNWGTFLLPRPISTNQQRHNRGHYFVMRYDASIATHEEVRRTMKADPRVIRTANVKLGDGKLETLSRFGAIPWRSLEEA</sequence>
<protein>
    <recommendedName>
        <fullName evidence="2">Small ribosomal subunit protein bS6m</fullName>
    </recommendedName>
</protein>
<name>RT06_NEUCR</name>
<proteinExistence type="evidence at protein level"/>
<keyword id="KW-0002">3D-structure</keyword>
<keyword id="KW-0496">Mitochondrion</keyword>
<keyword id="KW-1185">Reference proteome</keyword>
<keyword id="KW-0687">Ribonucleoprotein</keyword>
<keyword id="KW-0689">Ribosomal protein</keyword>
<comment type="function">
    <text evidence="4">Component of the mitochondrial ribosome (mitoribosome), a dedicated translation machinery responsible for the synthesis of mitochondrial genome-encoded proteins, including at least some of the essential transmembrane subunits of the mitochondrial respiratory chain. The mitoribosomes are attached to the mitochondrial inner membrane and translation products are cotranslationally integrated into the membrane.</text>
</comment>
<comment type="subunit">
    <text evidence="1">Component of the mitochondrial small ribosomal subunit (mt-SSU). Mature N.crassa 74S mitochondrial ribosomes consist of a small (37S) and a large (54S) subunit. The 37S small subunit contains a 16S ribosomal RNA (16S mt-rRNA) and 32 different proteins. The 54S large subunit contains a 23S rRNA (23S mt-rRNA) and 42 different proteins.</text>
</comment>
<comment type="subcellular location">
    <subcellularLocation>
        <location evidence="1">Mitochondrion</location>
    </subcellularLocation>
</comment>
<comment type="similarity">
    <text evidence="3">Belongs to the bacterial ribosomal protein bS6 family.</text>
</comment>
<accession>Q7SB95</accession>
<dbReference type="EMBL" id="CM002238">
    <property type="protein sequence ID" value="EAA33667.1"/>
    <property type="molecule type" value="Genomic_DNA"/>
</dbReference>
<dbReference type="RefSeq" id="XP_962903.1">
    <property type="nucleotide sequence ID" value="XM_957810.2"/>
</dbReference>
<dbReference type="PDB" id="6YW5">
    <property type="method" value="EM"/>
    <property type="resolution" value="2.85 A"/>
    <property type="chains" value="FF=1-117"/>
</dbReference>
<dbReference type="PDB" id="6YWX">
    <property type="method" value="EM"/>
    <property type="resolution" value="3.10 A"/>
    <property type="chains" value="FF=1-117"/>
</dbReference>
<dbReference type="PDBsum" id="6YW5"/>
<dbReference type="PDBsum" id="6YWX"/>
<dbReference type="EMDB" id="EMD-10958"/>
<dbReference type="EMDB" id="EMD-10978"/>
<dbReference type="SMR" id="Q7SB95"/>
<dbReference type="FunCoup" id="Q7SB95">
    <property type="interactions" value="209"/>
</dbReference>
<dbReference type="STRING" id="367110.Q7SB95"/>
<dbReference type="PaxDb" id="5141-EFNCRP00000007682"/>
<dbReference type="EnsemblFungi" id="EAA33667">
    <property type="protein sequence ID" value="EAA33667"/>
    <property type="gene ID" value="NCU05717"/>
</dbReference>
<dbReference type="GeneID" id="3879061"/>
<dbReference type="KEGG" id="ncr:NCU05717"/>
<dbReference type="VEuPathDB" id="FungiDB:NCU05717"/>
<dbReference type="HOGENOM" id="CLU_126331_1_0_1"/>
<dbReference type="InParanoid" id="Q7SB95"/>
<dbReference type="OMA" id="RGVQYWG"/>
<dbReference type="OrthoDB" id="10259681at2759"/>
<dbReference type="Proteomes" id="UP000001805">
    <property type="component" value="Chromosome 3, Linkage Group III"/>
</dbReference>
<dbReference type="GO" id="GO:0005763">
    <property type="term" value="C:mitochondrial small ribosomal subunit"/>
    <property type="evidence" value="ECO:0000318"/>
    <property type="project" value="GO_Central"/>
</dbReference>
<dbReference type="GO" id="GO:0070181">
    <property type="term" value="F:small ribosomal subunit rRNA binding"/>
    <property type="evidence" value="ECO:0000318"/>
    <property type="project" value="GO_Central"/>
</dbReference>
<dbReference type="GO" id="GO:0003735">
    <property type="term" value="F:structural constituent of ribosome"/>
    <property type="evidence" value="ECO:0000318"/>
    <property type="project" value="GO_Central"/>
</dbReference>
<dbReference type="GO" id="GO:0006412">
    <property type="term" value="P:translation"/>
    <property type="evidence" value="ECO:0007669"/>
    <property type="project" value="InterPro"/>
</dbReference>
<dbReference type="CDD" id="cd15465">
    <property type="entry name" value="bS6_mito"/>
    <property type="match status" value="1"/>
</dbReference>
<dbReference type="FunFam" id="3.30.70.60:FF:000007">
    <property type="entry name" value="37S ribosomal protein Mrp17"/>
    <property type="match status" value="1"/>
</dbReference>
<dbReference type="Gene3D" id="3.30.70.60">
    <property type="match status" value="1"/>
</dbReference>
<dbReference type="InterPro" id="IPR000529">
    <property type="entry name" value="Ribosomal_bS6"/>
</dbReference>
<dbReference type="InterPro" id="IPR035980">
    <property type="entry name" value="Ribosomal_bS6_sf"/>
</dbReference>
<dbReference type="InterPro" id="IPR014717">
    <property type="entry name" value="Transl_elong_EF1B/ribsomal_bS6"/>
</dbReference>
<dbReference type="NCBIfam" id="TIGR00166">
    <property type="entry name" value="S6"/>
    <property type="match status" value="1"/>
</dbReference>
<dbReference type="PANTHER" id="PTHR21011">
    <property type="entry name" value="MITOCHONDRIAL 28S RIBOSOMAL PROTEIN S6"/>
    <property type="match status" value="1"/>
</dbReference>
<dbReference type="PANTHER" id="PTHR21011:SF1">
    <property type="entry name" value="SMALL RIBOSOMAL SUBUNIT PROTEIN BS6M"/>
    <property type="match status" value="1"/>
</dbReference>
<dbReference type="Pfam" id="PF01250">
    <property type="entry name" value="Ribosomal_S6"/>
    <property type="match status" value="1"/>
</dbReference>
<dbReference type="SUPFAM" id="SSF54995">
    <property type="entry name" value="Ribosomal protein S6"/>
    <property type="match status" value="1"/>
</dbReference>
<feature type="chain" id="PRO_0000458571" description="Small ribosomal subunit protein bS6m">
    <location>
        <begin position="1"/>
        <end position="117"/>
    </location>
</feature>